<name>TGT_CUPPJ</name>
<evidence type="ECO:0000255" key="1">
    <source>
        <dbReference type="HAMAP-Rule" id="MF_00168"/>
    </source>
</evidence>
<accession>Q46XG4</accession>
<feature type="chain" id="PRO_1000016832" description="Queuine tRNA-ribosyltransferase">
    <location>
        <begin position="1"/>
        <end position="376"/>
    </location>
</feature>
<feature type="region of interest" description="RNA binding" evidence="1">
    <location>
        <begin position="251"/>
        <end position="257"/>
    </location>
</feature>
<feature type="region of interest" description="RNA binding; important for wobble base 34 recognition" evidence="1">
    <location>
        <begin position="275"/>
        <end position="279"/>
    </location>
</feature>
<feature type="active site" description="Proton acceptor" evidence="1">
    <location>
        <position position="90"/>
    </location>
</feature>
<feature type="active site" description="Nucleophile" evidence="1">
    <location>
        <position position="270"/>
    </location>
</feature>
<feature type="binding site" evidence="1">
    <location>
        <begin position="90"/>
        <end position="94"/>
    </location>
    <ligand>
        <name>substrate</name>
    </ligand>
</feature>
<feature type="binding site" evidence="1">
    <location>
        <position position="144"/>
    </location>
    <ligand>
        <name>substrate</name>
    </ligand>
</feature>
<feature type="binding site" evidence="1">
    <location>
        <position position="193"/>
    </location>
    <ligand>
        <name>substrate</name>
    </ligand>
</feature>
<feature type="binding site" evidence="1">
    <location>
        <position position="220"/>
    </location>
    <ligand>
        <name>substrate</name>
    </ligand>
</feature>
<feature type="binding site" evidence="1">
    <location>
        <position position="308"/>
    </location>
    <ligand>
        <name>Zn(2+)</name>
        <dbReference type="ChEBI" id="CHEBI:29105"/>
    </ligand>
</feature>
<feature type="binding site" evidence="1">
    <location>
        <position position="310"/>
    </location>
    <ligand>
        <name>Zn(2+)</name>
        <dbReference type="ChEBI" id="CHEBI:29105"/>
    </ligand>
</feature>
<feature type="binding site" evidence="1">
    <location>
        <position position="313"/>
    </location>
    <ligand>
        <name>Zn(2+)</name>
        <dbReference type="ChEBI" id="CHEBI:29105"/>
    </ligand>
</feature>
<feature type="binding site" evidence="1">
    <location>
        <position position="339"/>
    </location>
    <ligand>
        <name>Zn(2+)</name>
        <dbReference type="ChEBI" id="CHEBI:29105"/>
    </ligand>
</feature>
<dbReference type="EC" id="2.4.2.29" evidence="1"/>
<dbReference type="EMBL" id="CP000090">
    <property type="protein sequence ID" value="AAZ62169.1"/>
    <property type="molecule type" value="Genomic_DNA"/>
</dbReference>
<dbReference type="SMR" id="Q46XG4"/>
<dbReference type="STRING" id="264198.Reut_A2808"/>
<dbReference type="KEGG" id="reu:Reut_A2808"/>
<dbReference type="eggNOG" id="COG0343">
    <property type="taxonomic scope" value="Bacteria"/>
</dbReference>
<dbReference type="HOGENOM" id="CLU_022060_0_1_4"/>
<dbReference type="OrthoDB" id="9805417at2"/>
<dbReference type="UniPathway" id="UPA00392"/>
<dbReference type="GO" id="GO:0005829">
    <property type="term" value="C:cytosol"/>
    <property type="evidence" value="ECO:0007669"/>
    <property type="project" value="TreeGrafter"/>
</dbReference>
<dbReference type="GO" id="GO:0046872">
    <property type="term" value="F:metal ion binding"/>
    <property type="evidence" value="ECO:0007669"/>
    <property type="project" value="UniProtKB-KW"/>
</dbReference>
<dbReference type="GO" id="GO:0008479">
    <property type="term" value="F:tRNA-guanosine(34) queuine transglycosylase activity"/>
    <property type="evidence" value="ECO:0007669"/>
    <property type="project" value="UniProtKB-UniRule"/>
</dbReference>
<dbReference type="GO" id="GO:0008616">
    <property type="term" value="P:queuosine biosynthetic process"/>
    <property type="evidence" value="ECO:0007669"/>
    <property type="project" value="UniProtKB-UniRule"/>
</dbReference>
<dbReference type="GO" id="GO:0002099">
    <property type="term" value="P:tRNA wobble guanine modification"/>
    <property type="evidence" value="ECO:0007669"/>
    <property type="project" value="TreeGrafter"/>
</dbReference>
<dbReference type="GO" id="GO:0101030">
    <property type="term" value="P:tRNA-guanine transglycosylation"/>
    <property type="evidence" value="ECO:0007669"/>
    <property type="project" value="InterPro"/>
</dbReference>
<dbReference type="FunFam" id="3.20.20.105:FF:000001">
    <property type="entry name" value="Queuine tRNA-ribosyltransferase"/>
    <property type="match status" value="1"/>
</dbReference>
<dbReference type="Gene3D" id="3.20.20.105">
    <property type="entry name" value="Queuine tRNA-ribosyltransferase-like"/>
    <property type="match status" value="1"/>
</dbReference>
<dbReference type="HAMAP" id="MF_00168">
    <property type="entry name" value="Q_tRNA_Tgt"/>
    <property type="match status" value="1"/>
</dbReference>
<dbReference type="InterPro" id="IPR050076">
    <property type="entry name" value="ArchSynthase1/Queuine_TRR"/>
</dbReference>
<dbReference type="InterPro" id="IPR004803">
    <property type="entry name" value="TGT"/>
</dbReference>
<dbReference type="InterPro" id="IPR036511">
    <property type="entry name" value="TGT-like_sf"/>
</dbReference>
<dbReference type="InterPro" id="IPR002616">
    <property type="entry name" value="tRNA_ribo_trans-like"/>
</dbReference>
<dbReference type="NCBIfam" id="TIGR00430">
    <property type="entry name" value="Q_tRNA_tgt"/>
    <property type="match status" value="1"/>
</dbReference>
<dbReference type="NCBIfam" id="TIGR00449">
    <property type="entry name" value="tgt_general"/>
    <property type="match status" value="1"/>
</dbReference>
<dbReference type="PANTHER" id="PTHR46499">
    <property type="entry name" value="QUEUINE TRNA-RIBOSYLTRANSFERASE"/>
    <property type="match status" value="1"/>
</dbReference>
<dbReference type="PANTHER" id="PTHR46499:SF1">
    <property type="entry name" value="QUEUINE TRNA-RIBOSYLTRANSFERASE"/>
    <property type="match status" value="1"/>
</dbReference>
<dbReference type="Pfam" id="PF01702">
    <property type="entry name" value="TGT"/>
    <property type="match status" value="1"/>
</dbReference>
<dbReference type="SUPFAM" id="SSF51713">
    <property type="entry name" value="tRNA-guanine transglycosylase"/>
    <property type="match status" value="1"/>
</dbReference>
<sequence>MLNFELITTDGNARRGRVTLNHGVVETPIFMPVGTYGSVKAMSPLELNEIGAEIILGNTFHLWLRPGLDVVNTHEGLHRFIGWDKPILTDSGGFQVFSLGDLRKITEDGVTFASPVNGDKLFLSPEISMQIQRTLNSDIVMQFDECTPYEIEGRPATHEEAAKSMRMSLRWAKRSRDEFERLANPNALFGIVQGGMFEDLRDESLAGLSELDFHGFAIGGLSVGEPKEDMMRVLEHVAPRLPADKPHYLMGVGTPEDLVAGVAAGVDMFDCVMPTRNARNGWLFTRYGDVKIRNAAHRNDPRPLDESCACYTCRNFSRAYLHHLHRVGEILGARLNTIHNLHYYLQLMREVRESIEQHRFSDFRRQFASDRARGTR</sequence>
<gene>
    <name evidence="1" type="primary">tgt</name>
    <name type="ordered locus">Reut_A2808</name>
</gene>
<protein>
    <recommendedName>
        <fullName evidence="1">Queuine tRNA-ribosyltransferase</fullName>
        <ecNumber evidence="1">2.4.2.29</ecNumber>
    </recommendedName>
    <alternativeName>
        <fullName evidence="1">Guanine insertion enzyme</fullName>
    </alternativeName>
    <alternativeName>
        <fullName evidence="1">tRNA-guanine transglycosylase</fullName>
    </alternativeName>
</protein>
<keyword id="KW-0328">Glycosyltransferase</keyword>
<keyword id="KW-0479">Metal-binding</keyword>
<keyword id="KW-0671">Queuosine biosynthesis</keyword>
<keyword id="KW-0808">Transferase</keyword>
<keyword id="KW-0819">tRNA processing</keyword>
<keyword id="KW-0862">Zinc</keyword>
<comment type="function">
    <text evidence="1">Catalyzes the base-exchange of a guanine (G) residue with the queuine precursor 7-aminomethyl-7-deazaguanine (PreQ1) at position 34 (anticodon wobble position) in tRNAs with GU(N) anticodons (tRNA-Asp, -Asn, -His and -Tyr). Catalysis occurs through a double-displacement mechanism. The nucleophile active site attacks the C1' of nucleotide 34 to detach the guanine base from the RNA, forming a covalent enzyme-RNA intermediate. The proton acceptor active site deprotonates the incoming PreQ1, allowing a nucleophilic attack on the C1' of the ribose to form the product. After dissociation, two additional enzymatic reactions on the tRNA convert PreQ1 to queuine (Q), resulting in the hypermodified nucleoside queuosine (7-(((4,5-cis-dihydroxy-2-cyclopenten-1-yl)amino)methyl)-7-deazaguanosine).</text>
</comment>
<comment type="catalytic activity">
    <reaction evidence="1">
        <text>7-aminomethyl-7-carbaguanine + guanosine(34) in tRNA = 7-aminomethyl-7-carbaguanosine(34) in tRNA + guanine</text>
        <dbReference type="Rhea" id="RHEA:24104"/>
        <dbReference type="Rhea" id="RHEA-COMP:10341"/>
        <dbReference type="Rhea" id="RHEA-COMP:10342"/>
        <dbReference type="ChEBI" id="CHEBI:16235"/>
        <dbReference type="ChEBI" id="CHEBI:58703"/>
        <dbReference type="ChEBI" id="CHEBI:74269"/>
        <dbReference type="ChEBI" id="CHEBI:82833"/>
        <dbReference type="EC" id="2.4.2.29"/>
    </reaction>
</comment>
<comment type="cofactor">
    <cofactor evidence="1">
        <name>Zn(2+)</name>
        <dbReference type="ChEBI" id="CHEBI:29105"/>
    </cofactor>
    <text evidence="1">Binds 1 zinc ion per subunit.</text>
</comment>
<comment type="pathway">
    <text evidence="1">tRNA modification; tRNA-queuosine biosynthesis.</text>
</comment>
<comment type="subunit">
    <text evidence="1">Homodimer. Within each dimer, one monomer is responsible for RNA recognition and catalysis, while the other monomer binds to the replacement base PreQ1.</text>
</comment>
<comment type="similarity">
    <text evidence="1">Belongs to the queuine tRNA-ribosyltransferase family.</text>
</comment>
<reference key="1">
    <citation type="journal article" date="2010" name="PLoS ONE">
        <title>The complete multipartite genome sequence of Cupriavidus necator JMP134, a versatile pollutant degrader.</title>
        <authorList>
            <person name="Lykidis A."/>
            <person name="Perez-Pantoja D."/>
            <person name="Ledger T."/>
            <person name="Mavromatis K."/>
            <person name="Anderson I.J."/>
            <person name="Ivanova N.N."/>
            <person name="Hooper S.D."/>
            <person name="Lapidus A."/>
            <person name="Lucas S."/>
            <person name="Gonzalez B."/>
            <person name="Kyrpides N.C."/>
        </authorList>
    </citation>
    <scope>NUCLEOTIDE SEQUENCE [LARGE SCALE GENOMIC DNA]</scope>
    <source>
        <strain>JMP134 / LMG 1197</strain>
    </source>
</reference>
<organism>
    <name type="scientific">Cupriavidus pinatubonensis (strain JMP 134 / LMG 1197)</name>
    <name type="common">Cupriavidus necator (strain JMP 134)</name>
    <dbReference type="NCBI Taxonomy" id="264198"/>
    <lineage>
        <taxon>Bacteria</taxon>
        <taxon>Pseudomonadati</taxon>
        <taxon>Pseudomonadota</taxon>
        <taxon>Betaproteobacteria</taxon>
        <taxon>Burkholderiales</taxon>
        <taxon>Burkholderiaceae</taxon>
        <taxon>Cupriavidus</taxon>
    </lineage>
</organism>
<proteinExistence type="inferred from homology"/>